<sequence>MKNHLSNVLCAMRSDFKDNHQETINKMIQFGTVKYGIVKQLKDRARSADKDIGSDQEENGGCSPLTTATTTASPSRSPEPEEEQPEEQSTSEQSIPEQSTPDHQLENDIKSEAKSEIEPVEDNNNRVAMTKPSSEEREPNASGSMPSSPVAEASAEEAATERTPEKEKEKDVEVDVEKPDEAPSSAVPSTEVTLPGGAGAPVTLEAIQNMQMAIAQFAAKTIANGSNGADNEAAMKQLAFLQQTLFNLQQQQLFQIQLIQQLQSQLALNQAKQEEDTEEDADQEQDQEQETDTYEEEERIADMELRQKAEARMAEAKARQHLINAGVPLRESSGSPAESLKRRREHDHESQPNRRPSLDNTHKADTAQDALAKLKEMENTPLPFGSDLASSIITNHDDLPEPNSLDLLQKRAQEVLDSASQGILANSMADDFAFGEKSGEGKGRNEPFFKHRCRYCGKVFGSDSALQIHIRSHTGERPFKCNVCGSRFTTKGNLKVHFQRHAQKFPHVPMNATPIPEHMDKFHPPLLDQMSPTDSSPNHSPAPPPLGSAPASFPPAFPGLQNLYRPPMEILKSLGAAAPHQYFPQELPTDLRKPSPQLDEDEPQVKNEPVEEKDQREEHEQEMAECSEPEPEPLPLEVRIKEERVEEQEQVKQEDHRIEPRRTPSPSSEHRSPHHHRHSHMGYPPVVQPIQPAALMHPQSSPGSQSHLDHLPTPGQLPPREDFFAERFPLNFTTAKMLSPEHHSPVRSPAGGALPPGVPPPPHHHPHHMARSPFFNPIKHEMAALLPRPHSNDNSWENFIEVSNTCETMKLKELMKNKKISDPNQCVVCDRVLSCKSALQMHYRTHTGERPFKCRICGRAFTTKGNLKTHMAVHKIRPPMRNFHQCPVCHKKYSNALVLQQHIRLHTGEPTDLTPEQIQAAEIRDPPPSMMPGHFMNPFAAAAFHFGALPGGPGGPPGPNHGAHNGALGSESSQGDMDDNMDCGEDYDDDVSSEHLSNSNLEQEGDRSRSGDDFKSLLFEQKLRIDATGVVNTNPVRPRSSASSHGHSVGSTSAPTSPSVHASSQVIKRSSSPARSEASQGALDLTPRAAPTSSSSSRSPLPKEKPVSPPSLPRSPSGSSHASANILTSPLPPTVGIDCLPPGLQHHLQQQHQHLMQQQAAVAAAAAAQHHHHQQMAALHQHQEQLRREAAEAQQKAAAAAAAAAAAAAAQRQTPPQARDQRQEGGPGAGPPPNPLMGARPPFGMFPNLPLFPPATTQNMCNAMNQIAQSVMPAAPFNPLALSGVRGSTTCGICYKTFPCHSALEIHYRSHTKERPFKCSICDRGFTTKGNLKQHMLTHKIRDMEQETFRNRAVKYMSEWNEDRE</sequence>
<name>SALM_DROME</name>
<protein>
    <recommendedName>
        <fullName>Homeotic protein spalt-major</fullName>
    </recommendedName>
</protein>
<accession>P39770</accession>
<accession>Q8MSC6</accession>
<accession>Q9VKH2</accession>
<reference key="1">
    <citation type="journal article" date="1994" name="EMBO J.">
        <title>Spalt encodes an evolutionarily conserved zinc finger protein of novel structure which provides homeotic gene function in the head and tail region of the Drosophila embryo.</title>
        <authorList>
            <person name="Kuehnlein R.P."/>
            <person name="Frommer G."/>
            <person name="Friedrich M."/>
            <person name="Gonzalez-Gaitan M."/>
            <person name="Weber A."/>
            <person name="Wagner-Bernholz J.F."/>
            <person name="Gehring W.J."/>
            <person name="Jaeckle H."/>
            <person name="Schuh R."/>
        </authorList>
    </citation>
    <scope>NUCLEOTIDE SEQUENCE [GENOMIC DNA]</scope>
    <scope>FUNCTION</scope>
    <scope>DEVELOPMENTAL STAGE</scope>
</reference>
<reference key="2">
    <citation type="journal article" date="2000" name="Science">
        <title>The genome sequence of Drosophila melanogaster.</title>
        <authorList>
            <person name="Adams M.D."/>
            <person name="Celniker S.E."/>
            <person name="Holt R.A."/>
            <person name="Evans C.A."/>
            <person name="Gocayne J.D."/>
            <person name="Amanatides P.G."/>
            <person name="Scherer S.E."/>
            <person name="Li P.W."/>
            <person name="Hoskins R.A."/>
            <person name="Galle R.F."/>
            <person name="George R.A."/>
            <person name="Lewis S.E."/>
            <person name="Richards S."/>
            <person name="Ashburner M."/>
            <person name="Henderson S.N."/>
            <person name="Sutton G.G."/>
            <person name="Wortman J.R."/>
            <person name="Yandell M.D."/>
            <person name="Zhang Q."/>
            <person name="Chen L.X."/>
            <person name="Brandon R.C."/>
            <person name="Rogers Y.-H.C."/>
            <person name="Blazej R.G."/>
            <person name="Champe M."/>
            <person name="Pfeiffer B.D."/>
            <person name="Wan K.H."/>
            <person name="Doyle C."/>
            <person name="Baxter E.G."/>
            <person name="Helt G."/>
            <person name="Nelson C.R."/>
            <person name="Miklos G.L.G."/>
            <person name="Abril J.F."/>
            <person name="Agbayani A."/>
            <person name="An H.-J."/>
            <person name="Andrews-Pfannkoch C."/>
            <person name="Baldwin D."/>
            <person name="Ballew R.M."/>
            <person name="Basu A."/>
            <person name="Baxendale J."/>
            <person name="Bayraktaroglu L."/>
            <person name="Beasley E.M."/>
            <person name="Beeson K.Y."/>
            <person name="Benos P.V."/>
            <person name="Berman B.P."/>
            <person name="Bhandari D."/>
            <person name="Bolshakov S."/>
            <person name="Borkova D."/>
            <person name="Botchan M.R."/>
            <person name="Bouck J."/>
            <person name="Brokstein P."/>
            <person name="Brottier P."/>
            <person name="Burtis K.C."/>
            <person name="Busam D.A."/>
            <person name="Butler H."/>
            <person name="Cadieu E."/>
            <person name="Center A."/>
            <person name="Chandra I."/>
            <person name="Cherry J.M."/>
            <person name="Cawley S."/>
            <person name="Dahlke C."/>
            <person name="Davenport L.B."/>
            <person name="Davies P."/>
            <person name="de Pablos B."/>
            <person name="Delcher A."/>
            <person name="Deng Z."/>
            <person name="Mays A.D."/>
            <person name="Dew I."/>
            <person name="Dietz S.M."/>
            <person name="Dodson K."/>
            <person name="Doup L.E."/>
            <person name="Downes M."/>
            <person name="Dugan-Rocha S."/>
            <person name="Dunkov B.C."/>
            <person name="Dunn P."/>
            <person name="Durbin K.J."/>
            <person name="Evangelista C.C."/>
            <person name="Ferraz C."/>
            <person name="Ferriera S."/>
            <person name="Fleischmann W."/>
            <person name="Fosler C."/>
            <person name="Gabrielian A.E."/>
            <person name="Garg N.S."/>
            <person name="Gelbart W.M."/>
            <person name="Glasser K."/>
            <person name="Glodek A."/>
            <person name="Gong F."/>
            <person name="Gorrell J.H."/>
            <person name="Gu Z."/>
            <person name="Guan P."/>
            <person name="Harris M."/>
            <person name="Harris N.L."/>
            <person name="Harvey D.A."/>
            <person name="Heiman T.J."/>
            <person name="Hernandez J.R."/>
            <person name="Houck J."/>
            <person name="Hostin D."/>
            <person name="Houston K.A."/>
            <person name="Howland T.J."/>
            <person name="Wei M.-H."/>
            <person name="Ibegwam C."/>
            <person name="Jalali M."/>
            <person name="Kalush F."/>
            <person name="Karpen G.H."/>
            <person name="Ke Z."/>
            <person name="Kennison J.A."/>
            <person name="Ketchum K.A."/>
            <person name="Kimmel B.E."/>
            <person name="Kodira C.D."/>
            <person name="Kraft C.L."/>
            <person name="Kravitz S."/>
            <person name="Kulp D."/>
            <person name="Lai Z."/>
            <person name="Lasko P."/>
            <person name="Lei Y."/>
            <person name="Levitsky A.A."/>
            <person name="Li J.H."/>
            <person name="Li Z."/>
            <person name="Liang Y."/>
            <person name="Lin X."/>
            <person name="Liu X."/>
            <person name="Mattei B."/>
            <person name="McIntosh T.C."/>
            <person name="McLeod M.P."/>
            <person name="McPherson D."/>
            <person name="Merkulov G."/>
            <person name="Milshina N.V."/>
            <person name="Mobarry C."/>
            <person name="Morris J."/>
            <person name="Moshrefi A."/>
            <person name="Mount S.M."/>
            <person name="Moy M."/>
            <person name="Murphy B."/>
            <person name="Murphy L."/>
            <person name="Muzny D.M."/>
            <person name="Nelson D.L."/>
            <person name="Nelson D.R."/>
            <person name="Nelson K.A."/>
            <person name="Nixon K."/>
            <person name="Nusskern D.R."/>
            <person name="Pacleb J.M."/>
            <person name="Palazzolo M."/>
            <person name="Pittman G.S."/>
            <person name="Pan S."/>
            <person name="Pollard J."/>
            <person name="Puri V."/>
            <person name="Reese M.G."/>
            <person name="Reinert K."/>
            <person name="Remington K."/>
            <person name="Saunders R.D.C."/>
            <person name="Scheeler F."/>
            <person name="Shen H."/>
            <person name="Shue B.C."/>
            <person name="Siden-Kiamos I."/>
            <person name="Simpson M."/>
            <person name="Skupski M.P."/>
            <person name="Smith T.J."/>
            <person name="Spier E."/>
            <person name="Spradling A.C."/>
            <person name="Stapleton M."/>
            <person name="Strong R."/>
            <person name="Sun E."/>
            <person name="Svirskas R."/>
            <person name="Tector C."/>
            <person name="Turner R."/>
            <person name="Venter E."/>
            <person name="Wang A.H."/>
            <person name="Wang X."/>
            <person name="Wang Z.-Y."/>
            <person name="Wassarman D.A."/>
            <person name="Weinstock G.M."/>
            <person name="Weissenbach J."/>
            <person name="Williams S.M."/>
            <person name="Woodage T."/>
            <person name="Worley K.C."/>
            <person name="Wu D."/>
            <person name="Yang S."/>
            <person name="Yao Q.A."/>
            <person name="Ye J."/>
            <person name="Yeh R.-F."/>
            <person name="Zaveri J.S."/>
            <person name="Zhan M."/>
            <person name="Zhang G."/>
            <person name="Zhao Q."/>
            <person name="Zheng L."/>
            <person name="Zheng X.H."/>
            <person name="Zhong F.N."/>
            <person name="Zhong W."/>
            <person name="Zhou X."/>
            <person name="Zhu S.C."/>
            <person name="Zhu X."/>
            <person name="Smith H.O."/>
            <person name="Gibbs R.A."/>
            <person name="Myers E.W."/>
            <person name="Rubin G.M."/>
            <person name="Venter J.C."/>
        </authorList>
    </citation>
    <scope>NUCLEOTIDE SEQUENCE [LARGE SCALE GENOMIC DNA]</scope>
    <source>
        <strain>Berkeley</strain>
    </source>
</reference>
<reference key="3">
    <citation type="journal article" date="2002" name="Genome Biol.">
        <title>Annotation of the Drosophila melanogaster euchromatic genome: a systematic review.</title>
        <authorList>
            <person name="Misra S."/>
            <person name="Crosby M.A."/>
            <person name="Mungall C.J."/>
            <person name="Matthews B.B."/>
            <person name="Campbell K.S."/>
            <person name="Hradecky P."/>
            <person name="Huang Y."/>
            <person name="Kaminker J.S."/>
            <person name="Millburn G.H."/>
            <person name="Prochnik S.E."/>
            <person name="Smith C.D."/>
            <person name="Tupy J.L."/>
            <person name="Whitfield E.J."/>
            <person name="Bayraktaroglu L."/>
            <person name="Berman B.P."/>
            <person name="Bettencourt B.R."/>
            <person name="Celniker S.E."/>
            <person name="de Grey A.D.N.J."/>
            <person name="Drysdale R.A."/>
            <person name="Harris N.L."/>
            <person name="Richter J."/>
            <person name="Russo S."/>
            <person name="Schroeder A.J."/>
            <person name="Shu S.Q."/>
            <person name="Stapleton M."/>
            <person name="Yamada C."/>
            <person name="Ashburner M."/>
            <person name="Gelbart W.M."/>
            <person name="Rubin G.M."/>
            <person name="Lewis S.E."/>
        </authorList>
    </citation>
    <scope>GENOME REANNOTATION</scope>
    <source>
        <strain>Berkeley</strain>
    </source>
</reference>
<reference key="4">
    <citation type="journal article" date="2002" name="Genome Biol.">
        <title>A Drosophila full-length cDNA resource.</title>
        <authorList>
            <person name="Stapleton M."/>
            <person name="Carlson J.W."/>
            <person name="Brokstein P."/>
            <person name="Yu C."/>
            <person name="Champe M."/>
            <person name="George R.A."/>
            <person name="Guarin H."/>
            <person name="Kronmiller B."/>
            <person name="Pacleb J.M."/>
            <person name="Park S."/>
            <person name="Wan K.H."/>
            <person name="Rubin G.M."/>
            <person name="Celniker S.E."/>
        </authorList>
    </citation>
    <scope>NUCLEOTIDE SEQUENCE [LARGE SCALE MRNA] OF 855-1365</scope>
    <source>
        <strain>Berkeley</strain>
        <tissue>Embryo</tissue>
    </source>
</reference>
<reference key="5">
    <citation type="journal article" date="2008" name="J. Proteome Res.">
        <title>Phosphoproteome analysis of Drosophila melanogaster embryos.</title>
        <authorList>
            <person name="Zhai B."/>
            <person name="Villen J."/>
            <person name="Beausoleil S.A."/>
            <person name="Mintseris J."/>
            <person name="Gygi S.P."/>
        </authorList>
    </citation>
    <scope>PHOSPHORYLATION [LARGE SCALE ANALYSIS] AT SER-739; SER-744; SER-1076 AND SER-1079</scope>
    <scope>IDENTIFICATION BY MASS SPECTROMETRY</scope>
    <source>
        <tissue>Embryo</tissue>
    </source>
</reference>
<dbReference type="EMBL" id="X75541">
    <property type="protein sequence ID" value="CAA53229.1"/>
    <property type="status" value="ALT_SEQ"/>
    <property type="molecule type" value="Genomic_DNA"/>
</dbReference>
<dbReference type="EMBL" id="AE014134">
    <property type="protein sequence ID" value="AAF53097.3"/>
    <property type="molecule type" value="Genomic_DNA"/>
</dbReference>
<dbReference type="EMBL" id="AY118906">
    <property type="protein sequence ID" value="AAM50766.1"/>
    <property type="status" value="ALT_INIT"/>
    <property type="molecule type" value="mRNA"/>
</dbReference>
<dbReference type="PIR" id="S40022">
    <property type="entry name" value="S40022"/>
</dbReference>
<dbReference type="RefSeq" id="NP_723670.2">
    <property type="nucleotide sequence ID" value="NM_164966.3"/>
</dbReference>
<dbReference type="SMR" id="P39770"/>
<dbReference type="BioGRID" id="60626">
    <property type="interactions" value="28"/>
</dbReference>
<dbReference type="FunCoup" id="P39770">
    <property type="interactions" value="365"/>
</dbReference>
<dbReference type="IntAct" id="P39770">
    <property type="interactions" value="11"/>
</dbReference>
<dbReference type="STRING" id="7227.FBpp0088852"/>
<dbReference type="GlyGen" id="P39770">
    <property type="glycosylation" value="1 site"/>
</dbReference>
<dbReference type="iPTMnet" id="P39770"/>
<dbReference type="PaxDb" id="7227-FBpp0088852"/>
<dbReference type="EnsemblMetazoa" id="FBtr0089913">
    <property type="protein sequence ID" value="FBpp0088852"/>
    <property type="gene ID" value="FBgn0261648"/>
</dbReference>
<dbReference type="GeneID" id="34569"/>
<dbReference type="KEGG" id="dme:Dmel_CG6464"/>
<dbReference type="AGR" id="FB:FBgn0261648"/>
<dbReference type="CTD" id="34569"/>
<dbReference type="FlyBase" id="FBgn0261648">
    <property type="gene designation" value="salm"/>
</dbReference>
<dbReference type="VEuPathDB" id="VectorBase:FBgn0261648"/>
<dbReference type="eggNOG" id="KOG1074">
    <property type="taxonomic scope" value="Eukaryota"/>
</dbReference>
<dbReference type="GeneTree" id="ENSGT00940000167374"/>
<dbReference type="InParanoid" id="P39770"/>
<dbReference type="OMA" id="LPCANAR"/>
<dbReference type="OrthoDB" id="8749569at2759"/>
<dbReference type="PhylomeDB" id="P39770"/>
<dbReference type="Reactome" id="R-DME-8943724">
    <property type="pathway name" value="Regulation of PTEN gene transcription"/>
</dbReference>
<dbReference type="SignaLink" id="P39770"/>
<dbReference type="BioGRID-ORCS" id="34569">
    <property type="hits" value="0 hits in 3 CRISPR screens"/>
</dbReference>
<dbReference type="ChiTaRS" id="sls">
    <property type="organism name" value="fly"/>
</dbReference>
<dbReference type="GenomeRNAi" id="34569"/>
<dbReference type="PRO" id="PR:P39770"/>
<dbReference type="Proteomes" id="UP000000803">
    <property type="component" value="Chromosome 2L"/>
</dbReference>
<dbReference type="Bgee" id="FBgn0261648">
    <property type="expression patterns" value="Expressed in adult oenocyte (Drosophila) in body wall and 139 other cell types or tissues"/>
</dbReference>
<dbReference type="ExpressionAtlas" id="P39770">
    <property type="expression patterns" value="baseline and differential"/>
</dbReference>
<dbReference type="GO" id="GO:0005634">
    <property type="term" value="C:nucleus"/>
    <property type="evidence" value="ECO:0000314"/>
    <property type="project" value="FlyBase"/>
</dbReference>
<dbReference type="GO" id="GO:0003677">
    <property type="term" value="F:DNA binding"/>
    <property type="evidence" value="ECO:0007669"/>
    <property type="project" value="UniProtKB-KW"/>
</dbReference>
<dbReference type="GO" id="GO:0000981">
    <property type="term" value="F:DNA-binding transcription factor activity, RNA polymerase II-specific"/>
    <property type="evidence" value="ECO:0000318"/>
    <property type="project" value="GO_Central"/>
</dbReference>
<dbReference type="GO" id="GO:0008270">
    <property type="term" value="F:zinc ion binding"/>
    <property type="evidence" value="ECO:0007669"/>
    <property type="project" value="UniProtKB-KW"/>
</dbReference>
<dbReference type="GO" id="GO:0048098">
    <property type="term" value="P:antennal joint development"/>
    <property type="evidence" value="ECO:0000315"/>
    <property type="project" value="FlyBase"/>
</dbReference>
<dbReference type="GO" id="GO:0001751">
    <property type="term" value="P:compound eye photoreceptor cell differentiation"/>
    <property type="evidence" value="ECO:0000315"/>
    <property type="project" value="FlyBase"/>
</dbReference>
<dbReference type="GO" id="GO:0021782">
    <property type="term" value="P:glial cell development"/>
    <property type="evidence" value="ECO:0000315"/>
    <property type="project" value="FlyBase"/>
</dbReference>
<dbReference type="GO" id="GO:0008586">
    <property type="term" value="P:imaginal disc-derived wing vein morphogenesis"/>
    <property type="evidence" value="ECO:0000304"/>
    <property type="project" value="FlyBase"/>
</dbReference>
<dbReference type="GO" id="GO:0030539">
    <property type="term" value="P:male genitalia development"/>
    <property type="evidence" value="ECO:0000315"/>
    <property type="project" value="FlyBase"/>
</dbReference>
<dbReference type="GO" id="GO:0008584">
    <property type="term" value="P:male gonad development"/>
    <property type="evidence" value="ECO:0000315"/>
    <property type="project" value="FlyBase"/>
</dbReference>
<dbReference type="GO" id="GO:0048644">
    <property type="term" value="P:muscle organ morphogenesis"/>
    <property type="evidence" value="ECO:0000315"/>
    <property type="project" value="FlyBase"/>
</dbReference>
<dbReference type="GO" id="GO:0035155">
    <property type="term" value="P:negative regulation of terminal cell fate specification, open tracheal system"/>
    <property type="evidence" value="ECO:0000315"/>
    <property type="project" value="FlyBase"/>
</dbReference>
<dbReference type="GO" id="GO:0035310">
    <property type="term" value="P:notum cell fate specification"/>
    <property type="evidence" value="ECO:0000315"/>
    <property type="project" value="FlyBase"/>
</dbReference>
<dbReference type="GO" id="GO:0007438">
    <property type="term" value="P:oenocyte development"/>
    <property type="evidence" value="ECO:0000315"/>
    <property type="project" value="FlyBase"/>
</dbReference>
<dbReference type="GO" id="GO:0007424">
    <property type="term" value="P:open tracheal system development"/>
    <property type="evidence" value="ECO:0000315"/>
    <property type="project" value="FlyBase"/>
</dbReference>
<dbReference type="GO" id="GO:0045466">
    <property type="term" value="P:R7 cell differentiation"/>
    <property type="evidence" value="ECO:0000315"/>
    <property type="project" value="FlyBase"/>
</dbReference>
<dbReference type="GO" id="GO:0045465">
    <property type="term" value="P:R8 cell differentiation"/>
    <property type="evidence" value="ECO:0000315"/>
    <property type="project" value="FlyBase"/>
</dbReference>
<dbReference type="GO" id="GO:0000381">
    <property type="term" value="P:regulation of alternative mRNA splicing, via spliceosome"/>
    <property type="evidence" value="ECO:0000315"/>
    <property type="project" value="FlyBase"/>
</dbReference>
<dbReference type="GO" id="GO:0042659">
    <property type="term" value="P:regulation of cell fate specification"/>
    <property type="evidence" value="ECO:0000315"/>
    <property type="project" value="FlyBase"/>
</dbReference>
<dbReference type="GO" id="GO:0006355">
    <property type="term" value="P:regulation of DNA-templated transcription"/>
    <property type="evidence" value="ECO:0000315"/>
    <property type="project" value="FlyBase"/>
</dbReference>
<dbReference type="GO" id="GO:0006357">
    <property type="term" value="P:regulation of transcription by RNA polymerase II"/>
    <property type="evidence" value="ECO:0000318"/>
    <property type="project" value="GO_Central"/>
</dbReference>
<dbReference type="GO" id="GO:0007423">
    <property type="term" value="P:sensory organ development"/>
    <property type="evidence" value="ECO:0000315"/>
    <property type="project" value="FlyBase"/>
</dbReference>
<dbReference type="GO" id="GO:0007605">
    <property type="term" value="P:sensory perception of sound"/>
    <property type="evidence" value="ECO:0000315"/>
    <property type="project" value="FlyBase"/>
</dbReference>
<dbReference type="GO" id="GO:0007525">
    <property type="term" value="P:somatic muscle development"/>
    <property type="evidence" value="ECO:0000315"/>
    <property type="project" value="FlyBase"/>
</dbReference>
<dbReference type="GO" id="GO:0035277">
    <property type="term" value="P:spiracle morphogenesis, open tracheal system"/>
    <property type="evidence" value="ECO:0000315"/>
    <property type="project" value="FlyBase"/>
</dbReference>
<dbReference type="GO" id="GO:0035202">
    <property type="term" value="P:tracheal pit formation in open tracheal system"/>
    <property type="evidence" value="ECO:0000315"/>
    <property type="project" value="FlyBase"/>
</dbReference>
<dbReference type="FunFam" id="3.30.160.60:FF:002381">
    <property type="entry name" value="Putative spalt protein"/>
    <property type="match status" value="1"/>
</dbReference>
<dbReference type="FunFam" id="3.30.160.60:FF:000708">
    <property type="entry name" value="Sal-like protein 1"/>
    <property type="match status" value="1"/>
</dbReference>
<dbReference type="FunFam" id="3.30.160.60:FF:000025">
    <property type="entry name" value="Spalt-like transcription factor 1"/>
    <property type="match status" value="1"/>
</dbReference>
<dbReference type="FunFam" id="3.30.160.60:FF:000341">
    <property type="entry name" value="Spalt-like transcription factor 1"/>
    <property type="match status" value="1"/>
</dbReference>
<dbReference type="FunFam" id="3.30.160.60:FF:000215">
    <property type="entry name" value="Spalt-like transcription factor 3"/>
    <property type="match status" value="1"/>
</dbReference>
<dbReference type="FunFam" id="3.30.160.60:FF:000291">
    <property type="entry name" value="Spalt-like transcription factor 4"/>
    <property type="match status" value="1"/>
</dbReference>
<dbReference type="Gene3D" id="3.30.160.60">
    <property type="entry name" value="Classic Zinc Finger"/>
    <property type="match status" value="7"/>
</dbReference>
<dbReference type="InterPro" id="IPR051565">
    <property type="entry name" value="Sal_C2H2-zinc-finger"/>
</dbReference>
<dbReference type="InterPro" id="IPR036236">
    <property type="entry name" value="Znf_C2H2_sf"/>
</dbReference>
<dbReference type="InterPro" id="IPR013087">
    <property type="entry name" value="Znf_C2H2_type"/>
</dbReference>
<dbReference type="PANTHER" id="PTHR23233:SF87">
    <property type="entry name" value="HOMEOTIC PROTEIN SPALT-MAJOR"/>
    <property type="match status" value="1"/>
</dbReference>
<dbReference type="PANTHER" id="PTHR23233">
    <property type="entry name" value="SAL-LIKE PROTEIN"/>
    <property type="match status" value="1"/>
</dbReference>
<dbReference type="Pfam" id="PF00096">
    <property type="entry name" value="zf-C2H2"/>
    <property type="match status" value="5"/>
</dbReference>
<dbReference type="SMART" id="SM00355">
    <property type="entry name" value="ZnF_C2H2"/>
    <property type="match status" value="7"/>
</dbReference>
<dbReference type="SUPFAM" id="SSF57667">
    <property type="entry name" value="beta-beta-alpha zinc fingers"/>
    <property type="match status" value="4"/>
</dbReference>
<dbReference type="PROSITE" id="PS00028">
    <property type="entry name" value="ZINC_FINGER_C2H2_1"/>
    <property type="match status" value="7"/>
</dbReference>
<dbReference type="PROSITE" id="PS50157">
    <property type="entry name" value="ZINC_FINGER_C2H2_2"/>
    <property type="match status" value="7"/>
</dbReference>
<feature type="chain" id="PRO_0000047018" description="Homeotic protein spalt-major">
    <location>
        <begin position="1"/>
        <end position="1365"/>
    </location>
</feature>
<feature type="zinc finger region" description="C2H2-type 1" evidence="1">
    <location>
        <begin position="451"/>
        <end position="473"/>
    </location>
</feature>
<feature type="zinc finger region" description="C2H2-type 2" evidence="1">
    <location>
        <begin position="479"/>
        <end position="501"/>
    </location>
</feature>
<feature type="zinc finger region" description="C2H2-type 3" evidence="1">
    <location>
        <begin position="824"/>
        <end position="846"/>
    </location>
</feature>
<feature type="zinc finger region" description="C2H2-type 4" evidence="1">
    <location>
        <begin position="852"/>
        <end position="874"/>
    </location>
</feature>
<feature type="zinc finger region" description="C2H2-type 5" evidence="1">
    <location>
        <begin position="884"/>
        <end position="906"/>
    </location>
</feature>
<feature type="zinc finger region" description="C2H2-type 6" evidence="1">
    <location>
        <begin position="1289"/>
        <end position="1311"/>
    </location>
</feature>
<feature type="zinc finger region" description="C2H2-type 7" evidence="1">
    <location>
        <begin position="1317"/>
        <end position="1339"/>
    </location>
</feature>
<feature type="region of interest" description="Disordered" evidence="2">
    <location>
        <begin position="47"/>
        <end position="194"/>
    </location>
</feature>
<feature type="region of interest" description="Disordered" evidence="2">
    <location>
        <begin position="270"/>
        <end position="298"/>
    </location>
</feature>
<feature type="region of interest" description="Disordered" evidence="2">
    <location>
        <begin position="322"/>
        <end position="363"/>
    </location>
</feature>
<feature type="region of interest" description="Disordered" evidence="2">
    <location>
        <begin position="508"/>
        <end position="554"/>
    </location>
</feature>
<feature type="region of interest" description="Disordered" evidence="2">
    <location>
        <begin position="586"/>
        <end position="716"/>
    </location>
</feature>
<feature type="region of interest" description="Disordered" evidence="2">
    <location>
        <begin position="740"/>
        <end position="772"/>
    </location>
</feature>
<feature type="region of interest" description="Disordered" evidence="2">
    <location>
        <begin position="948"/>
        <end position="1012"/>
    </location>
</feature>
<feature type="region of interest" description="Disordered" evidence="2">
    <location>
        <begin position="1030"/>
        <end position="1129"/>
    </location>
</feature>
<feature type="region of interest" description="Disordered" evidence="2">
    <location>
        <begin position="1146"/>
        <end position="1241"/>
    </location>
</feature>
<feature type="compositionally biased region" description="Low complexity" evidence="2">
    <location>
        <begin position="63"/>
        <end position="76"/>
    </location>
</feature>
<feature type="compositionally biased region" description="Low complexity" evidence="2">
    <location>
        <begin position="87"/>
        <end position="99"/>
    </location>
</feature>
<feature type="compositionally biased region" description="Basic and acidic residues" evidence="2">
    <location>
        <begin position="103"/>
        <end position="117"/>
    </location>
</feature>
<feature type="compositionally biased region" description="Low complexity" evidence="2">
    <location>
        <begin position="146"/>
        <end position="157"/>
    </location>
</feature>
<feature type="compositionally biased region" description="Basic and acidic residues" evidence="2">
    <location>
        <begin position="159"/>
        <end position="181"/>
    </location>
</feature>
<feature type="compositionally biased region" description="Acidic residues" evidence="2">
    <location>
        <begin position="275"/>
        <end position="298"/>
    </location>
</feature>
<feature type="compositionally biased region" description="Basic and acidic residues" evidence="2">
    <location>
        <begin position="346"/>
        <end position="363"/>
    </location>
</feature>
<feature type="compositionally biased region" description="Polar residues" evidence="2">
    <location>
        <begin position="530"/>
        <end position="539"/>
    </location>
</feature>
<feature type="compositionally biased region" description="Pro residues" evidence="2">
    <location>
        <begin position="540"/>
        <end position="554"/>
    </location>
</feature>
<feature type="compositionally biased region" description="Basic and acidic residues" evidence="2">
    <location>
        <begin position="603"/>
        <end position="622"/>
    </location>
</feature>
<feature type="compositionally biased region" description="Basic and acidic residues" evidence="2">
    <location>
        <begin position="638"/>
        <end position="662"/>
    </location>
</feature>
<feature type="compositionally biased region" description="Acidic residues" evidence="2">
    <location>
        <begin position="976"/>
        <end position="991"/>
    </location>
</feature>
<feature type="compositionally biased region" description="Low complexity" evidence="2">
    <location>
        <begin position="1040"/>
        <end position="1054"/>
    </location>
</feature>
<feature type="compositionally biased region" description="Polar residues" evidence="2">
    <location>
        <begin position="1055"/>
        <end position="1079"/>
    </location>
</feature>
<feature type="compositionally biased region" description="Low complexity" evidence="2">
    <location>
        <begin position="1085"/>
        <end position="1100"/>
    </location>
</feature>
<feature type="compositionally biased region" description="Low complexity" evidence="2">
    <location>
        <begin position="1114"/>
        <end position="1123"/>
    </location>
</feature>
<feature type="compositionally biased region" description="Low complexity" evidence="2">
    <location>
        <begin position="1146"/>
        <end position="1168"/>
    </location>
</feature>
<feature type="compositionally biased region" description="Basic and acidic residues" evidence="2">
    <location>
        <begin position="1181"/>
        <end position="1191"/>
    </location>
</feature>
<feature type="compositionally biased region" description="Low complexity" evidence="2">
    <location>
        <begin position="1192"/>
        <end position="1218"/>
    </location>
</feature>
<feature type="modified residue" description="Phosphoserine" evidence="3">
    <location>
        <position position="739"/>
    </location>
</feature>
<feature type="modified residue" description="Phosphoserine" evidence="3">
    <location>
        <position position="744"/>
    </location>
</feature>
<feature type="modified residue" description="Phosphoserine" evidence="3">
    <location>
        <position position="1076"/>
    </location>
</feature>
<feature type="modified residue" description="Phosphoserine" evidence="3">
    <location>
        <position position="1079"/>
    </location>
</feature>
<feature type="sequence conflict" description="In Ref. 1; CAA53229." evidence="5" ref="1">
    <original>K</original>
    <variation>M</variation>
    <location>
        <position position="178"/>
    </location>
</feature>
<feature type="sequence conflict" description="In Ref. 1; CAA53229." evidence="5" ref="1">
    <original>P</original>
    <variation>T</variation>
    <location>
        <position position="356"/>
    </location>
</feature>
<feature type="sequence conflict" description="In Ref. 1; CAA53229." evidence="5" ref="1">
    <original>P</original>
    <variation>K</variation>
    <location>
        <position position="1142"/>
    </location>
</feature>
<feature type="sequence conflict" description="In Ref. 1; CAA53229." evidence="5" ref="1">
    <original>H</original>
    <variation>D</variation>
    <location>
        <position position="1180"/>
    </location>
</feature>
<keyword id="KW-0217">Developmental protein</keyword>
<keyword id="KW-0238">DNA-binding</keyword>
<keyword id="KW-0479">Metal-binding</keyword>
<keyword id="KW-0539">Nucleus</keyword>
<keyword id="KW-0597">Phosphoprotein</keyword>
<keyword id="KW-1185">Reference proteome</keyword>
<keyword id="KW-0677">Repeat</keyword>
<keyword id="KW-0804">Transcription</keyword>
<keyword id="KW-0805">Transcription regulation</keyword>
<keyword id="KW-0862">Zinc</keyword>
<keyword id="KW-0863">Zinc-finger</keyword>
<comment type="function">
    <text evidence="4">Required for the establishment of the posterior-most head and the anterior-most tail segments of the embryo. Probably function as a transcriptional regulator. Could repress the transcription of the tsh gene.</text>
</comment>
<comment type="subcellular location">
    <subcellularLocation>
        <location evidence="5">Nucleus</location>
    </subcellularLocation>
</comment>
<comment type="developmental stage">
    <text evidence="4">First expressed at blastoderm stage and later in restricted aeras of the embryonic nervous system as well as in the developing trachea.</text>
</comment>
<comment type="similarity">
    <text evidence="5">Belongs to the sal C2H2-type zinc-finger protein family.</text>
</comment>
<comment type="sequence caution" evidence="5">
    <conflict type="erroneous initiation">
        <sequence resource="EMBL-CDS" id="AAM50766"/>
    </conflict>
</comment>
<comment type="sequence caution" evidence="5">
    <conflict type="erroneous gene model prediction">
        <sequence resource="EMBL-CDS" id="CAA53229"/>
    </conflict>
</comment>
<proteinExistence type="evidence at protein level"/>
<evidence type="ECO:0000255" key="1">
    <source>
        <dbReference type="PROSITE-ProRule" id="PRU00042"/>
    </source>
</evidence>
<evidence type="ECO:0000256" key="2">
    <source>
        <dbReference type="SAM" id="MobiDB-lite"/>
    </source>
</evidence>
<evidence type="ECO:0000269" key="3">
    <source>
    </source>
</evidence>
<evidence type="ECO:0000269" key="4">
    <source>
    </source>
</evidence>
<evidence type="ECO:0000305" key="5"/>
<organism>
    <name type="scientific">Drosophila melanogaster</name>
    <name type="common">Fruit fly</name>
    <dbReference type="NCBI Taxonomy" id="7227"/>
    <lineage>
        <taxon>Eukaryota</taxon>
        <taxon>Metazoa</taxon>
        <taxon>Ecdysozoa</taxon>
        <taxon>Arthropoda</taxon>
        <taxon>Hexapoda</taxon>
        <taxon>Insecta</taxon>
        <taxon>Pterygota</taxon>
        <taxon>Neoptera</taxon>
        <taxon>Endopterygota</taxon>
        <taxon>Diptera</taxon>
        <taxon>Brachycera</taxon>
        <taxon>Muscomorpha</taxon>
        <taxon>Ephydroidea</taxon>
        <taxon>Drosophilidae</taxon>
        <taxon>Drosophila</taxon>
        <taxon>Sophophora</taxon>
    </lineage>
</organism>
<gene>
    <name type="primary">salm</name>
    <name type="synonym">sal</name>
    <name type="ORF">CG6464</name>
</gene>